<feature type="transit peptide" description="Chloroplast" evidence="2">
    <location>
        <begin position="1"/>
        <end position="47"/>
    </location>
</feature>
<feature type="chain" id="PRO_0000420447" description="Single-stranded DNA-binding protein WHY1, chloroplastic">
    <location>
        <begin position="48"/>
        <end position="263"/>
    </location>
</feature>
<feature type="region of interest" description="Required for ssDNA binding" evidence="1">
    <location>
        <begin position="89"/>
        <end position="94"/>
    </location>
</feature>
<feature type="short sequence motif" description="Nuclear localization signal" evidence="2">
    <location>
        <begin position="167"/>
        <end position="180"/>
    </location>
</feature>
<feature type="mutagenesis site" description="No effect on DNA binding. Affects its function in DNA repair." evidence="9">
    <original>K</original>
    <variation>A</variation>
    <location>
        <position position="91"/>
    </location>
</feature>
<feature type="mutagenesis site" description="In atwhy1.2; reduces binding activity to single-stranded DNA." evidence="3">
    <original>G</original>
    <variation>E</variation>
    <location>
        <position position="148"/>
    </location>
</feature>
<feature type="mutagenesis site" description="In atwhy1.1; reduces binding activity to single-stranded DNA." evidence="3">
    <original>P</original>
    <variation>S</variation>
    <location>
        <position position="183"/>
    </location>
</feature>
<feature type="strand" evidence="12">
    <location>
        <begin position="85"/>
        <end position="88"/>
    </location>
</feature>
<feature type="strand" evidence="12">
    <location>
        <begin position="90"/>
        <end position="99"/>
    </location>
</feature>
<feature type="strand" evidence="12">
    <location>
        <begin position="102"/>
        <end position="105"/>
    </location>
</feature>
<feature type="strand" evidence="12">
    <location>
        <begin position="111"/>
        <end position="115"/>
    </location>
</feature>
<feature type="strand" evidence="12">
    <location>
        <begin position="118"/>
        <end position="126"/>
    </location>
</feature>
<feature type="helix" evidence="12">
    <location>
        <begin position="134"/>
        <end position="136"/>
    </location>
</feature>
<feature type="strand" evidence="12">
    <location>
        <begin position="138"/>
        <end position="142"/>
    </location>
</feature>
<feature type="helix" evidence="12">
    <location>
        <begin position="144"/>
        <end position="151"/>
    </location>
</feature>
<feature type="strand" evidence="12">
    <location>
        <begin position="159"/>
        <end position="163"/>
    </location>
</feature>
<feature type="turn" evidence="12">
    <location>
        <begin position="165"/>
        <end position="168"/>
    </location>
</feature>
<feature type="turn" evidence="12">
    <location>
        <begin position="170"/>
        <end position="174"/>
    </location>
</feature>
<feature type="strand" evidence="12">
    <location>
        <begin position="175"/>
        <end position="183"/>
    </location>
</feature>
<feature type="strand" evidence="12">
    <location>
        <begin position="190"/>
        <end position="198"/>
    </location>
</feature>
<feature type="turn" evidence="12">
    <location>
        <begin position="199"/>
        <end position="202"/>
    </location>
</feature>
<feature type="strand" evidence="12">
    <location>
        <begin position="203"/>
        <end position="211"/>
    </location>
</feature>
<feature type="helix" evidence="12">
    <location>
        <begin position="213"/>
        <end position="230"/>
    </location>
</feature>
<feature type="helix" evidence="12">
    <location>
        <begin position="233"/>
        <end position="237"/>
    </location>
</feature>
<sequence>MSQLLSTPLMAVNSNPRFLSSSSVLVTGGFAVKRHGFALKPTTKTVKLFSVKSRQTDYFEKQRFGDSSSSPSPAEGLPARFYVGHSIYKGKAALTVDPRAPEFVALDSGAFKLSKDGFLLLQFAPSAGVRQYDWSKKQVFSLSVTEIGTLVSLGPRESCEFFHDPFKGKSDEGKVRKVLKVEPLPDGSGHFFNLSVQNKLVNVDESIYIPITRAEFAVLISAFNFVLPYLIGWHAFANSIKPEETSRVNNASPNYGGDYEWNR</sequence>
<accession>Q9M9S3</accession>
<protein>
    <recommendedName>
        <fullName>Single-stranded DNA-binding protein WHY1, chloroplastic</fullName>
    </recommendedName>
    <alternativeName>
        <fullName>Protein PLASTID TRANSCRIPTIONALLY ACTIVE 1</fullName>
    </alternativeName>
    <alternativeName>
        <fullName>Protein WHIRLY 1</fullName>
        <shortName>AtWHY1</shortName>
    </alternativeName>
</protein>
<comment type="function">
    <text evidence="3 5 6 7 8 9">Single-stranded DNA-binding protein that functions in both chloroplasts and nucleus. In chloroplasts, maintains plastid genome stability by preventing break-induced and short homology-dependent illegitimate recombinations. In nucleus, modulates telomere length homeostasis by inhibiting the action of the telomerase at the extreme termini of chromosomes. Is recruited to a distal element upstream of the kinesin KP1 to mediate the transcriptional repression of KP1. Is required for full salicylic acid-dependent plant disease resistance responses. Can bind double-stranded DNA in vivo.</text>
</comment>
<comment type="subunit">
    <text evidence="1">Homotetramer.</text>
</comment>
<comment type="subcellular location">
    <subcellularLocation>
        <location evidence="4">Plastid</location>
        <location evidence="4">Chloroplast</location>
    </subcellularLocation>
    <subcellularLocation>
        <location evidence="3 4">Nucleus</location>
    </subcellularLocation>
    <text>Can localize to both chloroplast and nucleus (PubMed:15967440).</text>
</comment>
<comment type="induction">
    <text evidence="3 7">By salicylic acid (SA) and infection by H.parasitica.</text>
</comment>
<comment type="disruption phenotype">
    <text evidence="5 6">No visible phenotype under normal growth conditions, but mutant plants present a progressive lengthening of telomeric repeats.</text>
</comment>
<comment type="similarity">
    <text evidence="10">Belongs to the Whirly family.</text>
</comment>
<comment type="caution">
    <text evidence="11">It is uncertain whether Met-1 or Met-10 is the initiator.</text>
</comment>
<dbReference type="EMBL" id="AC012188">
    <property type="protein sequence ID" value="AAF43941.1"/>
    <property type="molecule type" value="Genomic_DNA"/>
</dbReference>
<dbReference type="EMBL" id="CP002684">
    <property type="protein sequence ID" value="AEE29160.1"/>
    <property type="molecule type" value="Genomic_DNA"/>
</dbReference>
<dbReference type="EMBL" id="AF332452">
    <property type="protein sequence ID" value="AAG48815.1"/>
    <property type="molecule type" value="mRNA"/>
</dbReference>
<dbReference type="EMBL" id="AF370156">
    <property type="protein sequence ID" value="AAK43971.1"/>
    <property type="molecule type" value="mRNA"/>
</dbReference>
<dbReference type="EMBL" id="AY059097">
    <property type="protein sequence ID" value="AAL15203.1"/>
    <property type="molecule type" value="mRNA"/>
</dbReference>
<dbReference type="PIR" id="F86278">
    <property type="entry name" value="F86278"/>
</dbReference>
<dbReference type="RefSeq" id="NP_172893.1">
    <property type="nucleotide sequence ID" value="NM_101308.4"/>
</dbReference>
<dbReference type="PDB" id="4KOO">
    <property type="method" value="X-ray"/>
    <property type="resolution" value="1.88 A"/>
    <property type="chains" value="A/B/C/D=74-241"/>
</dbReference>
<dbReference type="PDBsum" id="4KOO"/>
<dbReference type="SMR" id="Q9M9S3"/>
<dbReference type="BioGRID" id="23243">
    <property type="interactions" value="3"/>
</dbReference>
<dbReference type="ComplexPortal" id="CPX-1337">
    <property type="entry name" value="WHY1 complex"/>
</dbReference>
<dbReference type="FunCoup" id="Q9M9S3">
    <property type="interactions" value="1038"/>
</dbReference>
<dbReference type="STRING" id="3702.Q9M9S3"/>
<dbReference type="PaxDb" id="3702-AT1G14410.1"/>
<dbReference type="ProteomicsDB" id="242654"/>
<dbReference type="EnsemblPlants" id="AT1G14410.1">
    <property type="protein sequence ID" value="AT1G14410.1"/>
    <property type="gene ID" value="AT1G14410"/>
</dbReference>
<dbReference type="GeneID" id="838003"/>
<dbReference type="Gramene" id="AT1G14410.1">
    <property type="protein sequence ID" value="AT1G14410.1"/>
    <property type="gene ID" value="AT1G14410"/>
</dbReference>
<dbReference type="KEGG" id="ath:AT1G14410"/>
<dbReference type="Araport" id="AT1G14410"/>
<dbReference type="TAIR" id="AT1G14410">
    <property type="gene designation" value="WHY1"/>
</dbReference>
<dbReference type="eggNOG" id="ENOG502QRRY">
    <property type="taxonomic scope" value="Eukaryota"/>
</dbReference>
<dbReference type="HOGENOM" id="CLU_062935_1_0_1"/>
<dbReference type="InParanoid" id="Q9M9S3"/>
<dbReference type="OMA" id="DYFEPQQ"/>
<dbReference type="PhylomeDB" id="Q9M9S3"/>
<dbReference type="CD-CODE" id="4299E36E">
    <property type="entry name" value="Nucleolus"/>
</dbReference>
<dbReference type="EvolutionaryTrace" id="Q9M9S3"/>
<dbReference type="PRO" id="PR:Q9M9S3"/>
<dbReference type="Proteomes" id="UP000006548">
    <property type="component" value="Chromosome 1"/>
</dbReference>
<dbReference type="ExpressionAtlas" id="Q9M9S3">
    <property type="expression patterns" value="baseline and differential"/>
</dbReference>
<dbReference type="GO" id="GO:0009507">
    <property type="term" value="C:chloroplast"/>
    <property type="evidence" value="ECO:0000314"/>
    <property type="project" value="ComplexPortal"/>
</dbReference>
<dbReference type="GO" id="GO:0042644">
    <property type="term" value="C:chloroplast nucleoid"/>
    <property type="evidence" value="ECO:0007005"/>
    <property type="project" value="TAIR"/>
</dbReference>
<dbReference type="GO" id="GO:0000781">
    <property type="term" value="C:chromosome, telomeric region"/>
    <property type="evidence" value="ECO:0000314"/>
    <property type="project" value="ComplexPortal"/>
</dbReference>
<dbReference type="GO" id="GO:1990391">
    <property type="term" value="C:DNA repair complex"/>
    <property type="evidence" value="ECO:0000353"/>
    <property type="project" value="ComplexPortal"/>
</dbReference>
<dbReference type="GO" id="GO:0005576">
    <property type="term" value="C:extracellular region"/>
    <property type="evidence" value="ECO:0007005"/>
    <property type="project" value="TAIR"/>
</dbReference>
<dbReference type="GO" id="GO:0003677">
    <property type="term" value="F:DNA binding"/>
    <property type="evidence" value="ECO:0000314"/>
    <property type="project" value="TAIR"/>
</dbReference>
<dbReference type="GO" id="GO:0003729">
    <property type="term" value="F:mRNA binding"/>
    <property type="evidence" value="ECO:0000314"/>
    <property type="project" value="TAIR"/>
</dbReference>
<dbReference type="GO" id="GO:0003697">
    <property type="term" value="F:single-stranded DNA binding"/>
    <property type="evidence" value="ECO:0000314"/>
    <property type="project" value="TAIR"/>
</dbReference>
<dbReference type="GO" id="GO:0042162">
    <property type="term" value="F:telomeric DNA binding"/>
    <property type="evidence" value="ECO:0000314"/>
    <property type="project" value="TAIR"/>
</dbReference>
<dbReference type="GO" id="GO:0006952">
    <property type="term" value="P:defense response"/>
    <property type="evidence" value="ECO:0000304"/>
    <property type="project" value="TAIR"/>
</dbReference>
<dbReference type="GO" id="GO:0006281">
    <property type="term" value="P:DNA repair"/>
    <property type="evidence" value="ECO:0000315"/>
    <property type="project" value="TAIR"/>
</dbReference>
<dbReference type="GO" id="GO:0032211">
    <property type="term" value="P:negative regulation of telomere maintenance via telomerase"/>
    <property type="evidence" value="ECO:0000315"/>
    <property type="project" value="TAIR"/>
</dbReference>
<dbReference type="GO" id="GO:0006355">
    <property type="term" value="P:regulation of DNA-templated transcription"/>
    <property type="evidence" value="ECO:0007669"/>
    <property type="project" value="InterPro"/>
</dbReference>
<dbReference type="GO" id="GO:0032204">
    <property type="term" value="P:regulation of telomere maintenance"/>
    <property type="evidence" value="ECO:0000315"/>
    <property type="project" value="ComplexPortal"/>
</dbReference>
<dbReference type="GO" id="GO:0009863">
    <property type="term" value="P:salicylic acid mediated signaling pathway"/>
    <property type="evidence" value="ECO:0000314"/>
    <property type="project" value="ComplexPortal"/>
</dbReference>
<dbReference type="GO" id="GO:0009627">
    <property type="term" value="P:systemic acquired resistance"/>
    <property type="evidence" value="ECO:0000315"/>
    <property type="project" value="ComplexPortal"/>
</dbReference>
<dbReference type="FunFam" id="2.30.31.10:FF:000002">
    <property type="entry name" value="Single-stranded DNA-binding protein WHY2, mitochondrial"/>
    <property type="match status" value="1"/>
</dbReference>
<dbReference type="Gene3D" id="2.30.31.10">
    <property type="entry name" value="Transcriptional Coactivator Pc4, Chain A"/>
    <property type="match status" value="1"/>
</dbReference>
<dbReference type="InterPro" id="IPR009044">
    <property type="entry name" value="ssDNA-bd_transcriptional_reg"/>
</dbReference>
<dbReference type="InterPro" id="IPR013742">
    <property type="entry name" value="Whirly"/>
</dbReference>
<dbReference type="PANTHER" id="PTHR31745:SF2">
    <property type="entry name" value="SINGLE-STRANDED DNA-BINDING PROTEIN WHY1, CHLOROPLASTIC"/>
    <property type="match status" value="1"/>
</dbReference>
<dbReference type="PANTHER" id="PTHR31745">
    <property type="entry name" value="SINGLE-STRANDED DNA-BINDING PROTEIN WHY2, MITOCHONDRIAL"/>
    <property type="match status" value="1"/>
</dbReference>
<dbReference type="Pfam" id="PF08536">
    <property type="entry name" value="Whirly"/>
    <property type="match status" value="1"/>
</dbReference>
<dbReference type="SUPFAM" id="SSF54447">
    <property type="entry name" value="ssDNA-binding transcriptional regulator domain"/>
    <property type="match status" value="1"/>
</dbReference>
<name>WHY1_ARATH</name>
<organism>
    <name type="scientific">Arabidopsis thaliana</name>
    <name type="common">Mouse-ear cress</name>
    <dbReference type="NCBI Taxonomy" id="3702"/>
    <lineage>
        <taxon>Eukaryota</taxon>
        <taxon>Viridiplantae</taxon>
        <taxon>Streptophyta</taxon>
        <taxon>Embryophyta</taxon>
        <taxon>Tracheophyta</taxon>
        <taxon>Spermatophyta</taxon>
        <taxon>Magnoliopsida</taxon>
        <taxon>eudicotyledons</taxon>
        <taxon>Gunneridae</taxon>
        <taxon>Pentapetalae</taxon>
        <taxon>rosids</taxon>
        <taxon>malvids</taxon>
        <taxon>Brassicales</taxon>
        <taxon>Brassicaceae</taxon>
        <taxon>Camelineae</taxon>
        <taxon>Arabidopsis</taxon>
    </lineage>
</organism>
<proteinExistence type="evidence at protein level"/>
<gene>
    <name type="primary">WHY1</name>
    <name type="synonym">PTAC1</name>
    <name type="ordered locus">At1g14410</name>
    <name type="ORF">F14L17.18</name>
</gene>
<keyword id="KW-0002">3D-structure</keyword>
<keyword id="KW-0150">Chloroplast</keyword>
<keyword id="KW-0227">DNA damage</keyword>
<keyword id="KW-0234">DNA repair</keyword>
<keyword id="KW-0238">DNA-binding</keyword>
<keyword id="KW-0539">Nucleus</keyword>
<keyword id="KW-0611">Plant defense</keyword>
<keyword id="KW-0934">Plastid</keyword>
<keyword id="KW-1185">Reference proteome</keyword>
<keyword id="KW-0804">Transcription</keyword>
<keyword id="KW-0805">Transcription regulation</keyword>
<keyword id="KW-0809">Transit peptide</keyword>
<evidence type="ECO:0000250" key="1"/>
<evidence type="ECO:0000255" key="2"/>
<evidence type="ECO:0000269" key="3">
    <source>
    </source>
</evidence>
<evidence type="ECO:0000269" key="4">
    <source>
    </source>
</evidence>
<evidence type="ECO:0000269" key="5">
    <source>
    </source>
</evidence>
<evidence type="ECO:0000269" key="6">
    <source>
    </source>
</evidence>
<evidence type="ECO:0000269" key="7">
    <source>
    </source>
</evidence>
<evidence type="ECO:0000269" key="8">
    <source>
    </source>
</evidence>
<evidence type="ECO:0000269" key="9">
    <source>
    </source>
</evidence>
<evidence type="ECO:0000305" key="10"/>
<evidence type="ECO:0000305" key="11">
    <source>
    </source>
</evidence>
<evidence type="ECO:0007829" key="12">
    <source>
        <dbReference type="PDB" id="4KOO"/>
    </source>
</evidence>
<reference key="1">
    <citation type="journal article" date="2000" name="Nature">
        <title>Sequence and analysis of chromosome 1 of the plant Arabidopsis thaliana.</title>
        <authorList>
            <person name="Theologis A."/>
            <person name="Ecker J.R."/>
            <person name="Palm C.J."/>
            <person name="Federspiel N.A."/>
            <person name="Kaul S."/>
            <person name="White O."/>
            <person name="Alonso J."/>
            <person name="Altafi H."/>
            <person name="Araujo R."/>
            <person name="Bowman C.L."/>
            <person name="Brooks S.Y."/>
            <person name="Buehler E."/>
            <person name="Chan A."/>
            <person name="Chao Q."/>
            <person name="Chen H."/>
            <person name="Cheuk R.F."/>
            <person name="Chin C.W."/>
            <person name="Chung M.K."/>
            <person name="Conn L."/>
            <person name="Conway A.B."/>
            <person name="Conway A.R."/>
            <person name="Creasy T.H."/>
            <person name="Dewar K."/>
            <person name="Dunn P."/>
            <person name="Etgu P."/>
            <person name="Feldblyum T.V."/>
            <person name="Feng J.-D."/>
            <person name="Fong B."/>
            <person name="Fujii C.Y."/>
            <person name="Gill J.E."/>
            <person name="Goldsmith A.D."/>
            <person name="Haas B."/>
            <person name="Hansen N.F."/>
            <person name="Hughes B."/>
            <person name="Huizar L."/>
            <person name="Hunter J.L."/>
            <person name="Jenkins J."/>
            <person name="Johnson-Hopson C."/>
            <person name="Khan S."/>
            <person name="Khaykin E."/>
            <person name="Kim C.J."/>
            <person name="Koo H.L."/>
            <person name="Kremenetskaia I."/>
            <person name="Kurtz D.B."/>
            <person name="Kwan A."/>
            <person name="Lam B."/>
            <person name="Langin-Hooper S."/>
            <person name="Lee A."/>
            <person name="Lee J.M."/>
            <person name="Lenz C.A."/>
            <person name="Li J.H."/>
            <person name="Li Y.-P."/>
            <person name="Lin X."/>
            <person name="Liu S.X."/>
            <person name="Liu Z.A."/>
            <person name="Luros J.S."/>
            <person name="Maiti R."/>
            <person name="Marziali A."/>
            <person name="Militscher J."/>
            <person name="Miranda M."/>
            <person name="Nguyen M."/>
            <person name="Nierman W.C."/>
            <person name="Osborne B.I."/>
            <person name="Pai G."/>
            <person name="Peterson J."/>
            <person name="Pham P.K."/>
            <person name="Rizzo M."/>
            <person name="Rooney T."/>
            <person name="Rowley D."/>
            <person name="Sakano H."/>
            <person name="Salzberg S.L."/>
            <person name="Schwartz J.R."/>
            <person name="Shinn P."/>
            <person name="Southwick A.M."/>
            <person name="Sun H."/>
            <person name="Tallon L.J."/>
            <person name="Tambunga G."/>
            <person name="Toriumi M.J."/>
            <person name="Town C.D."/>
            <person name="Utterback T."/>
            <person name="Van Aken S."/>
            <person name="Vaysberg M."/>
            <person name="Vysotskaia V.S."/>
            <person name="Walker M."/>
            <person name="Wu D."/>
            <person name="Yu G."/>
            <person name="Fraser C.M."/>
            <person name="Venter J.C."/>
            <person name="Davis R.W."/>
        </authorList>
    </citation>
    <scope>NUCLEOTIDE SEQUENCE [LARGE SCALE GENOMIC DNA]</scope>
    <source>
        <strain>cv. Columbia</strain>
    </source>
</reference>
<reference key="2">
    <citation type="journal article" date="2017" name="Plant J.">
        <title>Araport11: a complete reannotation of the Arabidopsis thaliana reference genome.</title>
        <authorList>
            <person name="Cheng C.Y."/>
            <person name="Krishnakumar V."/>
            <person name="Chan A.P."/>
            <person name="Thibaud-Nissen F."/>
            <person name="Schobel S."/>
            <person name="Town C.D."/>
        </authorList>
    </citation>
    <scope>GENOME REANNOTATION</scope>
    <source>
        <strain>cv. Columbia</strain>
    </source>
</reference>
<reference key="3">
    <citation type="journal article" date="2003" name="Science">
        <title>Empirical analysis of transcriptional activity in the Arabidopsis genome.</title>
        <authorList>
            <person name="Yamada K."/>
            <person name="Lim J."/>
            <person name="Dale J.M."/>
            <person name="Chen H."/>
            <person name="Shinn P."/>
            <person name="Palm C.J."/>
            <person name="Southwick A.M."/>
            <person name="Wu H.C."/>
            <person name="Kim C.J."/>
            <person name="Nguyen M."/>
            <person name="Pham P.K."/>
            <person name="Cheuk R.F."/>
            <person name="Karlin-Newmann G."/>
            <person name="Liu S.X."/>
            <person name="Lam B."/>
            <person name="Sakano H."/>
            <person name="Wu T."/>
            <person name="Yu G."/>
            <person name="Miranda M."/>
            <person name="Quach H.L."/>
            <person name="Tripp M."/>
            <person name="Chang C.H."/>
            <person name="Lee J.M."/>
            <person name="Toriumi M.J."/>
            <person name="Chan M.M."/>
            <person name="Tang C.C."/>
            <person name="Onodera C.S."/>
            <person name="Deng J.M."/>
            <person name="Akiyama K."/>
            <person name="Ansari Y."/>
            <person name="Arakawa T."/>
            <person name="Banh J."/>
            <person name="Banno F."/>
            <person name="Bowser L."/>
            <person name="Brooks S.Y."/>
            <person name="Carninci P."/>
            <person name="Chao Q."/>
            <person name="Choy N."/>
            <person name="Enju A."/>
            <person name="Goldsmith A.D."/>
            <person name="Gurjal M."/>
            <person name="Hansen N.F."/>
            <person name="Hayashizaki Y."/>
            <person name="Johnson-Hopson C."/>
            <person name="Hsuan V.W."/>
            <person name="Iida K."/>
            <person name="Karnes M."/>
            <person name="Khan S."/>
            <person name="Koesema E."/>
            <person name="Ishida J."/>
            <person name="Jiang P.X."/>
            <person name="Jones T."/>
            <person name="Kawai J."/>
            <person name="Kamiya A."/>
            <person name="Meyers C."/>
            <person name="Nakajima M."/>
            <person name="Narusaka M."/>
            <person name="Seki M."/>
            <person name="Sakurai T."/>
            <person name="Satou M."/>
            <person name="Tamse R."/>
            <person name="Vaysberg M."/>
            <person name="Wallender E.K."/>
            <person name="Wong C."/>
            <person name="Yamamura Y."/>
            <person name="Yuan S."/>
            <person name="Shinozaki K."/>
            <person name="Davis R.W."/>
            <person name="Theologis A."/>
            <person name="Ecker J.R."/>
        </authorList>
    </citation>
    <scope>NUCLEOTIDE SEQUENCE [LARGE SCALE MRNA]</scope>
    <source>
        <strain>cv. Columbia</strain>
    </source>
</reference>
<reference key="4">
    <citation type="journal article" date="2004" name="Dev. Cell">
        <title>A 'Whirly' transcription factor is required for salicylic acid-dependent disease resistance in Arabidopsis.</title>
        <authorList>
            <person name="Desveaux D."/>
            <person name="Subramaniam R."/>
            <person name="Despres C."/>
            <person name="Mess J.N."/>
            <person name="Levesque C."/>
            <person name="Fobert P.R."/>
            <person name="Dangl J.L."/>
            <person name="Brisson N."/>
        </authorList>
    </citation>
    <scope>FUNCTION</scope>
    <scope>SUBCELLULAR LOCATION</scope>
    <scope>INDUCTION</scope>
    <scope>MUTAGENESIS OF GLY-148 AND PRO-183</scope>
</reference>
<reference key="5">
    <citation type="journal article" date="2005" name="FEBS Lett.">
        <title>DNA-binding proteins of the Whirly family in Arabidopsis thaliana are targeted to the organelles.</title>
        <authorList>
            <person name="Krause K."/>
            <person name="Kilbienski I."/>
            <person name="Mulisch M."/>
            <person name="Roediger A."/>
            <person name="Schaefer A."/>
            <person name="Krupinska K."/>
        </authorList>
    </citation>
    <scope>SUBCELLULAR LOCATION</scope>
    <scope>GENE FAMILY</scope>
    <scope>NOMENCLATURE</scope>
</reference>
<reference key="6">
    <citation type="journal article" date="2005" name="Trends Plant Sci.">
        <title>Whirly transcription factors: defense gene regulation and beyond.</title>
        <authorList>
            <person name="Desveaux D."/>
            <person name="Marechal A."/>
            <person name="Brisson N."/>
        </authorList>
    </citation>
    <scope>GENE FAMILY</scope>
</reference>
<reference key="7">
    <citation type="journal article" date="2007" name="Plant J.">
        <title>Single-stranded DNA binding factor AtWHY1 modulates telomere length homeostasis in Arabidopsis.</title>
        <authorList>
            <person name="Yoo H.H."/>
            <person name="Kwon C."/>
            <person name="Lee M.M."/>
            <person name="Chung I.K."/>
        </authorList>
    </citation>
    <scope>FUNCTION</scope>
    <scope>DISRUPTION PHENOTYPE</scope>
</reference>
<reference key="8">
    <citation type="journal article" date="2009" name="Plant Mol. Biol.">
        <title>Recruitment of AtWHY1 and AtWHY3 by a distal element upstream of the kinesin gene AtKP1 to mediate transcriptional repression.</title>
        <authorList>
            <person name="Xiong J.Y."/>
            <person name="Lai C.X."/>
            <person name="Qu Z."/>
            <person name="Yang X.Y."/>
            <person name="Qin X.H."/>
            <person name="Liu G.Q."/>
        </authorList>
    </citation>
    <scope>FUNCTION</scope>
    <scope>INDUCTION BY SALICYLIC ACID</scope>
    <scope>IDENTIFICATION BY MASS SPECTROMETRY</scope>
</reference>
<reference key="9">
    <citation type="journal article" date="2009" name="Proc. Natl. Acad. Sci. U.S.A.">
        <title>Whirly proteins maintain plastid genome stability in Arabidopsis.</title>
        <authorList>
            <person name="Marechal A."/>
            <person name="Parent J.S."/>
            <person name="Veronneau-Lafortune F."/>
            <person name="Joyeux A."/>
            <person name="Lang B.F."/>
            <person name="Brisson N."/>
        </authorList>
    </citation>
    <scope>FUNCTION</scope>
    <scope>DISRUPTION PHENOTYPE</scope>
</reference>
<reference key="10">
    <citation type="journal article" date="2010" name="Plant Cell">
        <title>Crystal structures of DNA-Whirly complexes and their role in Arabidopsis organelle genome repair.</title>
        <authorList>
            <person name="Cappadocia L."/>
            <person name="Marechal A."/>
            <person name="Parent J.S."/>
            <person name="Lepage E."/>
            <person name="Sygusch J."/>
            <person name="Brisson N."/>
        </authorList>
    </citation>
    <scope>FUNCTION</scope>
</reference>
<reference key="11">
    <citation type="journal article" date="2012" name="Nucleic Acids Res.">
        <title>A conserved lysine residue of plant Whirly proteins is necessary for higher order protein assembly and protection against DNA damage.</title>
        <authorList>
            <person name="Cappadocia L."/>
            <person name="Parent J.S."/>
            <person name="Zampini E."/>
            <person name="Lepage E."/>
            <person name="Sygusch J."/>
            <person name="Brisson N."/>
        </authorList>
    </citation>
    <scope>FUNCTION</scope>
    <scope>MUTAGENESIS OF LYS-91</scope>
</reference>